<sequence length="167" mass="18810">MAVNDCFSLTYPHNPHPGDLIEVFRPCYQHWALYLGDGYVINIAPIDGIRSSFTSAKSVFSTKALVKMQLLKDVVGNDTYRINNKYDTTYPPLPVEEVIQRSEFPIGQEVAYDLLVNNCEHFVTLLRYGEGVSEQANRAIGTIGLVAAGIDIFTFLGLFPKRQRTKY</sequence>
<feature type="chain" id="PRO_0000152482" description="Phospholipase A and acyltransferase 1">
    <location>
        <begin position="1"/>
        <end position="167"/>
    </location>
</feature>
<feature type="topological domain" description="Cytoplasmic" evidence="3">
    <location>
        <begin position="1"/>
        <end position="138"/>
    </location>
</feature>
<feature type="transmembrane region" description="Helical" evidence="3">
    <location>
        <begin position="139"/>
        <end position="159"/>
    </location>
</feature>
<feature type="topological domain" description="Lumenal" evidence="3">
    <location>
        <begin position="160"/>
        <end position="167"/>
    </location>
</feature>
<feature type="domain" description="LRAT" evidence="4">
    <location>
        <begin position="20"/>
        <end position="135"/>
    </location>
</feature>
<feature type="active site" evidence="1">
    <location>
        <position position="30"/>
    </location>
</feature>
<feature type="active site" description="Acyl-thioester intermediate" evidence="1">
    <location>
        <position position="119"/>
    </location>
</feature>
<feature type="splice variant" id="VSP_060191" description="In isoform 2." evidence="8">
    <original>M</original>
    <variation>MPEACLEDLGGGEGAGLGRAPKTRGRRQGPQDAVWQARARNPRRDQRWRGARTLALTQRREAVVALAVALASGRCGWSHPGSASGTAASPWRTREARHCLQGTKTTQLEQM</variation>
    <location>
        <position position="1"/>
    </location>
</feature>
<feature type="sequence conflict" description="In Ref. 1; BAB23348." evidence="9" ref="1">
    <original>P</original>
    <variation>A</variation>
    <location>
        <position position="105"/>
    </location>
</feature>
<accession>Q9QZU4</accession>
<accession>Q5D099</accession>
<accession>Q9D0S3</accession>
<proteinExistence type="evidence at protein level"/>
<gene>
    <name evidence="2" type="primary">Plaat1</name>
    <name evidence="10" type="synonym">Hrasls</name>
    <name type="synonym">Hrasrs</name>
</gene>
<comment type="function">
    <text evidence="2 6">Exhibits both phospholipase A1/2 and acyltransferase activities (By similarity). Shows phospholipase A1 (PLA1) and A2 (PLA2) activity, catalyzing the calcium-independent release of fatty acids from the sn-1 or sn-2 position of glycerophospholipids (PubMed:21880860). Shows O-acyltransferase activity, catalyzing the transfer of a fatty acyl group from glycerophospholipid to the hydroxyl group of lysophospholipid (By similarity). Shows N-acyltransferase activity, catalyzing the calcium-independent transfer of a fatty acyl group at the sn-1 position of phosphatidylcholine (PC) and other glycerophospholipids to the primary amine of phosphatidylethanolamine (PE), forming N-acylphosphatidylethanolamine (NAPE), which serves as precursor for N-acylethanolamines (NAEs) (By similarity).</text>
</comment>
<comment type="catalytic activity">
    <reaction evidence="6">
        <text>a 1,2-diacyl-sn-glycero-3-phosphocholine + H2O = a 1-acyl-sn-glycero-3-phosphocholine + a fatty acid + H(+)</text>
        <dbReference type="Rhea" id="RHEA:15801"/>
        <dbReference type="ChEBI" id="CHEBI:15377"/>
        <dbReference type="ChEBI" id="CHEBI:15378"/>
        <dbReference type="ChEBI" id="CHEBI:28868"/>
        <dbReference type="ChEBI" id="CHEBI:57643"/>
        <dbReference type="ChEBI" id="CHEBI:58168"/>
        <dbReference type="EC" id="3.1.1.4"/>
    </reaction>
    <physiologicalReaction direction="left-to-right" evidence="2">
        <dbReference type="Rhea" id="RHEA:15802"/>
    </physiologicalReaction>
</comment>
<comment type="catalytic activity">
    <reaction evidence="6">
        <text>a 1,2-diacyl-sn-glycero-3-phosphocholine + H2O = a 2-acyl-sn-glycero-3-phosphocholine + a fatty acid + H(+)</text>
        <dbReference type="Rhea" id="RHEA:18689"/>
        <dbReference type="ChEBI" id="CHEBI:15377"/>
        <dbReference type="ChEBI" id="CHEBI:15378"/>
        <dbReference type="ChEBI" id="CHEBI:28868"/>
        <dbReference type="ChEBI" id="CHEBI:57643"/>
        <dbReference type="ChEBI" id="CHEBI:57875"/>
        <dbReference type="EC" id="3.1.1.32"/>
    </reaction>
    <physiologicalReaction direction="left-to-right" evidence="2">
        <dbReference type="Rhea" id="RHEA:18690"/>
    </physiologicalReaction>
</comment>
<comment type="catalytic activity">
    <reaction evidence="2">
        <text>1,2-dihexadecanoyl-sn-glycero-3-phosphocholine + H2O = 2-hexadecanoyl-sn-glycero-3-phosphocholine + hexadecanoate + H(+)</text>
        <dbReference type="Rhea" id="RHEA:40487"/>
        <dbReference type="ChEBI" id="CHEBI:7896"/>
        <dbReference type="ChEBI" id="CHEBI:15377"/>
        <dbReference type="ChEBI" id="CHEBI:15378"/>
        <dbReference type="ChEBI" id="CHEBI:72999"/>
        <dbReference type="ChEBI" id="CHEBI:76078"/>
    </reaction>
    <physiologicalReaction direction="left-to-right" evidence="2">
        <dbReference type="Rhea" id="RHEA:40488"/>
    </physiologicalReaction>
</comment>
<comment type="catalytic activity">
    <reaction evidence="2">
        <text>1,2-dihexadecanoyl-sn-glycero-3-phosphocholine + H2O = 1-hexadecanoyl-sn-glycero-3-phosphocholine + hexadecanoate + H(+)</text>
        <dbReference type="Rhea" id="RHEA:41223"/>
        <dbReference type="ChEBI" id="CHEBI:7896"/>
        <dbReference type="ChEBI" id="CHEBI:15377"/>
        <dbReference type="ChEBI" id="CHEBI:15378"/>
        <dbReference type="ChEBI" id="CHEBI:72998"/>
        <dbReference type="ChEBI" id="CHEBI:72999"/>
    </reaction>
    <physiologicalReaction direction="left-to-right" evidence="2">
        <dbReference type="Rhea" id="RHEA:41224"/>
    </physiologicalReaction>
</comment>
<comment type="catalytic activity">
    <reaction evidence="2">
        <text>1-hexadecanoyl-2-(5Z,8Z,11Z,14Z-eicosatetraenoyl)-sn-glycero-3-phosphoethanolamine + H2O = 2-(5Z,8Z,11Z,14Z)-eicosatetraenoyl-sn-glycero-3-phosphoethanolamine + hexadecanoate + H(+)</text>
        <dbReference type="Rhea" id="RHEA:41348"/>
        <dbReference type="ChEBI" id="CHEBI:7896"/>
        <dbReference type="ChEBI" id="CHEBI:15377"/>
        <dbReference type="ChEBI" id="CHEBI:15378"/>
        <dbReference type="ChEBI" id="CHEBI:73009"/>
        <dbReference type="ChEBI" id="CHEBI:76091"/>
    </reaction>
    <physiologicalReaction direction="left-to-right" evidence="2">
        <dbReference type="Rhea" id="RHEA:41349"/>
    </physiologicalReaction>
</comment>
<comment type="catalytic activity">
    <reaction evidence="2">
        <text>1-hexadecanoyl-2-(5Z,8Z,11Z,14Z-eicosatetraenoyl)-sn-glycero-3-phosphoethanolamine + H2O = 1-hexadecanoyl-sn-glycero-3-phosphoethanolamine + (5Z,8Z,11Z,14Z)-eicosatetraenoate + H(+)</text>
        <dbReference type="Rhea" id="RHEA:40431"/>
        <dbReference type="ChEBI" id="CHEBI:15377"/>
        <dbReference type="ChEBI" id="CHEBI:15378"/>
        <dbReference type="ChEBI" id="CHEBI:32395"/>
        <dbReference type="ChEBI" id="CHEBI:73004"/>
        <dbReference type="ChEBI" id="CHEBI:73009"/>
    </reaction>
    <physiologicalReaction direction="left-to-right" evidence="2">
        <dbReference type="Rhea" id="RHEA:40432"/>
    </physiologicalReaction>
</comment>
<comment type="catalytic activity">
    <reaction evidence="2">
        <text>1,2-di-(9Z-octadecenoyl)-sn-glycero-3-phosphoethanolamine + 1,2-dihexadecanoyl-sn-glycero-3-phosphocholine = hexadecanoyl-sn-glycero-3-phosphocholine + N-hexadecanoyl-1,2-di-(9Z-octadecenoyl)-sn-glycero-3-phosphoethanolamine + H(+)</text>
        <dbReference type="Rhea" id="RHEA:41360"/>
        <dbReference type="ChEBI" id="CHEBI:15378"/>
        <dbReference type="ChEBI" id="CHEBI:64563"/>
        <dbReference type="ChEBI" id="CHEBI:72999"/>
        <dbReference type="ChEBI" id="CHEBI:74986"/>
        <dbReference type="ChEBI" id="CHEBI:78097"/>
    </reaction>
    <physiologicalReaction direction="left-to-right" evidence="2">
        <dbReference type="Rhea" id="RHEA:41361"/>
    </physiologicalReaction>
</comment>
<comment type="catalytic activity">
    <reaction evidence="2">
        <text>1,2-dihexadecanoyl-sn-glycero-3-phosphocholine + a 2-acyl-sn-glycero-3-phosphocholine = a 1-hexadecanoyl-2-acyl-sn-glycero-3-phosphocholine + 2-hexadecanoyl-sn-glycero-3-phosphocholine</text>
        <dbReference type="Rhea" id="RHEA:41364"/>
        <dbReference type="ChEBI" id="CHEBI:57875"/>
        <dbReference type="ChEBI" id="CHEBI:72999"/>
        <dbReference type="ChEBI" id="CHEBI:76078"/>
        <dbReference type="ChEBI" id="CHEBI:77369"/>
    </reaction>
    <physiologicalReaction direction="left-to-right" evidence="2">
        <dbReference type="Rhea" id="RHEA:41365"/>
    </physiologicalReaction>
</comment>
<comment type="subcellular location">
    <molecule>Isoform 1</molecule>
    <subcellularLocation>
        <location evidence="3">Membrane</location>
        <topology evidence="3">Single-pass membrane protein</topology>
    </subcellularLocation>
    <subcellularLocation>
        <location evidence="5 7">Cytoplasm</location>
    </subcellularLocation>
</comment>
<comment type="subcellular location">
    <molecule>Isoform 2</molecule>
    <subcellularLocation>
        <location evidence="7">Nucleus</location>
    </subcellularLocation>
    <subcellularLocation>
        <location evidence="7">Cytoplasm</location>
    </subcellularLocation>
</comment>
<comment type="alternative products">
    <event type="alternative splicing"/>
    <isoform>
        <id>Q9QZU4-1</id>
        <name>1</name>
        <name evidence="8">PLAAT-1S</name>
        <sequence type="displayed"/>
    </isoform>
    <isoform>
        <id>Q9QZU4-2</id>
        <name>2</name>
        <name evidence="8">PLAAT-1L</name>
        <sequence type="described" ref="VSP_060191"/>
    </isoform>
</comment>
<comment type="tissue specificity">
    <molecule>Isoform 1</molecule>
    <text evidence="5 7">Expressed in skeletal muscle, heart, brain, bone marrow and testis.</text>
</comment>
<comment type="tissue specificity">
    <molecule>Isoform 2</molecule>
    <text evidence="7">Abundantly expressed in brain, heart, and skeletal muscle.</text>
</comment>
<comment type="similarity">
    <text evidence="9">Belongs to the H-rev107 family.</text>
</comment>
<reference key="1">
    <citation type="journal article" date="1999" name="J. Biol. Chem.">
        <title>Molecular cloning and biological activity of a novel Ha-Ras suppressor gene predominantly expressed in skeletal muscle, heart, brain, and bone marrow by differential display using clonal mouse EC cells, ATDC5.</title>
        <authorList>
            <person name="Akiyama H."/>
            <person name="Hiraki Y."/>
            <person name="Noda M."/>
            <person name="Shigeno C."/>
            <person name="Ito H."/>
            <person name="Nakamura T."/>
        </authorList>
    </citation>
    <scope>NUCLEOTIDE SEQUENCE [MRNA] (ISOFORM 1)</scope>
    <scope>TISSUE SPECIFICITY (ISOFORM 1)</scope>
    <scope>SUBCELLULAR LOCATION (ISOFORM 1)</scope>
</reference>
<reference key="2">
    <citation type="journal article" date="2011" name="J. Lipid Res.">
        <title>Enzymological analysis of the tumor suppressor A-C1 reveals a novel group of phospholipid-metabolizing enzymes.</title>
        <authorList>
            <person name="Shinohara N."/>
            <person name="Uyama T."/>
            <person name="Jin X.H."/>
            <person name="Tsuboi K."/>
            <person name="Tonai T."/>
            <person name="Houchi H."/>
            <person name="Ueda N."/>
        </authorList>
    </citation>
    <scope>NUCLEOTIDE SEQUENCE [MRNA] (ISOFORM 1)</scope>
    <scope>FUNCTION (ISOFORM 1)</scope>
    <scope>CATALYTIC ACTIVITY (ISOFORM 1)</scope>
</reference>
<reference key="3">
    <citation type="journal article" date="2005" name="Science">
        <title>The transcriptional landscape of the mammalian genome.</title>
        <authorList>
            <person name="Carninci P."/>
            <person name="Kasukawa T."/>
            <person name="Katayama S."/>
            <person name="Gough J."/>
            <person name="Frith M.C."/>
            <person name="Maeda N."/>
            <person name="Oyama R."/>
            <person name="Ravasi T."/>
            <person name="Lenhard B."/>
            <person name="Wells C."/>
            <person name="Kodzius R."/>
            <person name="Shimokawa K."/>
            <person name="Bajic V.B."/>
            <person name="Brenner S.E."/>
            <person name="Batalov S."/>
            <person name="Forrest A.R."/>
            <person name="Zavolan M."/>
            <person name="Davis M.J."/>
            <person name="Wilming L.G."/>
            <person name="Aidinis V."/>
            <person name="Allen J.E."/>
            <person name="Ambesi-Impiombato A."/>
            <person name="Apweiler R."/>
            <person name="Aturaliya R.N."/>
            <person name="Bailey T.L."/>
            <person name="Bansal M."/>
            <person name="Baxter L."/>
            <person name="Beisel K.W."/>
            <person name="Bersano T."/>
            <person name="Bono H."/>
            <person name="Chalk A.M."/>
            <person name="Chiu K.P."/>
            <person name="Choudhary V."/>
            <person name="Christoffels A."/>
            <person name="Clutterbuck D.R."/>
            <person name="Crowe M.L."/>
            <person name="Dalla E."/>
            <person name="Dalrymple B.P."/>
            <person name="de Bono B."/>
            <person name="Della Gatta G."/>
            <person name="di Bernardo D."/>
            <person name="Down T."/>
            <person name="Engstrom P."/>
            <person name="Fagiolini M."/>
            <person name="Faulkner G."/>
            <person name="Fletcher C.F."/>
            <person name="Fukushima T."/>
            <person name="Furuno M."/>
            <person name="Futaki S."/>
            <person name="Gariboldi M."/>
            <person name="Georgii-Hemming P."/>
            <person name="Gingeras T.R."/>
            <person name="Gojobori T."/>
            <person name="Green R.E."/>
            <person name="Gustincich S."/>
            <person name="Harbers M."/>
            <person name="Hayashi Y."/>
            <person name="Hensch T.K."/>
            <person name="Hirokawa N."/>
            <person name="Hill D."/>
            <person name="Huminiecki L."/>
            <person name="Iacono M."/>
            <person name="Ikeo K."/>
            <person name="Iwama A."/>
            <person name="Ishikawa T."/>
            <person name="Jakt M."/>
            <person name="Kanapin A."/>
            <person name="Katoh M."/>
            <person name="Kawasawa Y."/>
            <person name="Kelso J."/>
            <person name="Kitamura H."/>
            <person name="Kitano H."/>
            <person name="Kollias G."/>
            <person name="Krishnan S.P."/>
            <person name="Kruger A."/>
            <person name="Kummerfeld S.K."/>
            <person name="Kurochkin I.V."/>
            <person name="Lareau L.F."/>
            <person name="Lazarevic D."/>
            <person name="Lipovich L."/>
            <person name="Liu J."/>
            <person name="Liuni S."/>
            <person name="McWilliam S."/>
            <person name="Madan Babu M."/>
            <person name="Madera M."/>
            <person name="Marchionni L."/>
            <person name="Matsuda H."/>
            <person name="Matsuzawa S."/>
            <person name="Miki H."/>
            <person name="Mignone F."/>
            <person name="Miyake S."/>
            <person name="Morris K."/>
            <person name="Mottagui-Tabar S."/>
            <person name="Mulder N."/>
            <person name="Nakano N."/>
            <person name="Nakauchi H."/>
            <person name="Ng P."/>
            <person name="Nilsson R."/>
            <person name="Nishiguchi S."/>
            <person name="Nishikawa S."/>
            <person name="Nori F."/>
            <person name="Ohara O."/>
            <person name="Okazaki Y."/>
            <person name="Orlando V."/>
            <person name="Pang K.C."/>
            <person name="Pavan W.J."/>
            <person name="Pavesi G."/>
            <person name="Pesole G."/>
            <person name="Petrovsky N."/>
            <person name="Piazza S."/>
            <person name="Reed J."/>
            <person name="Reid J.F."/>
            <person name="Ring B.Z."/>
            <person name="Ringwald M."/>
            <person name="Rost B."/>
            <person name="Ruan Y."/>
            <person name="Salzberg S.L."/>
            <person name="Sandelin A."/>
            <person name="Schneider C."/>
            <person name="Schoenbach C."/>
            <person name="Sekiguchi K."/>
            <person name="Semple C.A."/>
            <person name="Seno S."/>
            <person name="Sessa L."/>
            <person name="Sheng Y."/>
            <person name="Shibata Y."/>
            <person name="Shimada H."/>
            <person name="Shimada K."/>
            <person name="Silva D."/>
            <person name="Sinclair B."/>
            <person name="Sperling S."/>
            <person name="Stupka E."/>
            <person name="Sugiura K."/>
            <person name="Sultana R."/>
            <person name="Takenaka Y."/>
            <person name="Taki K."/>
            <person name="Tammoja K."/>
            <person name="Tan S.L."/>
            <person name="Tang S."/>
            <person name="Taylor M.S."/>
            <person name="Tegner J."/>
            <person name="Teichmann S.A."/>
            <person name="Ueda H.R."/>
            <person name="van Nimwegen E."/>
            <person name="Verardo R."/>
            <person name="Wei C.L."/>
            <person name="Yagi K."/>
            <person name="Yamanishi H."/>
            <person name="Zabarovsky E."/>
            <person name="Zhu S."/>
            <person name="Zimmer A."/>
            <person name="Hide W."/>
            <person name="Bult C."/>
            <person name="Grimmond S.M."/>
            <person name="Teasdale R.D."/>
            <person name="Liu E.T."/>
            <person name="Brusic V."/>
            <person name="Quackenbush J."/>
            <person name="Wahlestedt C."/>
            <person name="Mattick J.S."/>
            <person name="Hume D.A."/>
            <person name="Kai C."/>
            <person name="Sasaki D."/>
            <person name="Tomaru Y."/>
            <person name="Fukuda S."/>
            <person name="Kanamori-Katayama M."/>
            <person name="Suzuki M."/>
            <person name="Aoki J."/>
            <person name="Arakawa T."/>
            <person name="Iida J."/>
            <person name="Imamura K."/>
            <person name="Itoh M."/>
            <person name="Kato T."/>
            <person name="Kawaji H."/>
            <person name="Kawagashira N."/>
            <person name="Kawashima T."/>
            <person name="Kojima M."/>
            <person name="Kondo S."/>
            <person name="Konno H."/>
            <person name="Nakano K."/>
            <person name="Ninomiya N."/>
            <person name="Nishio T."/>
            <person name="Okada M."/>
            <person name="Plessy C."/>
            <person name="Shibata K."/>
            <person name="Shiraki T."/>
            <person name="Suzuki S."/>
            <person name="Tagami M."/>
            <person name="Waki K."/>
            <person name="Watahiki A."/>
            <person name="Okamura-Oho Y."/>
            <person name="Suzuki H."/>
            <person name="Kawai J."/>
            <person name="Hayashizaki Y."/>
        </authorList>
    </citation>
    <scope>NUCLEOTIDE SEQUENCE [LARGE SCALE MRNA] (ISOFORM 1)</scope>
    <source>
        <strain>C57BL/6J</strain>
        <tissue>Embryo</tissue>
        <tissue>Spinal cord</tissue>
    </source>
</reference>
<reference key="4">
    <citation type="journal article" date="2009" name="PLoS Biol.">
        <title>Lineage-specific biology revealed by a finished genome assembly of the mouse.</title>
        <authorList>
            <person name="Church D.M."/>
            <person name="Goodstadt L."/>
            <person name="Hillier L.W."/>
            <person name="Zody M.C."/>
            <person name="Goldstein S."/>
            <person name="She X."/>
            <person name="Bult C.J."/>
            <person name="Agarwala R."/>
            <person name="Cherry J.L."/>
            <person name="DiCuccio M."/>
            <person name="Hlavina W."/>
            <person name="Kapustin Y."/>
            <person name="Meric P."/>
            <person name="Maglott D."/>
            <person name="Birtle Z."/>
            <person name="Marques A.C."/>
            <person name="Graves T."/>
            <person name="Zhou S."/>
            <person name="Teague B."/>
            <person name="Potamousis K."/>
            <person name="Churas C."/>
            <person name="Place M."/>
            <person name="Herschleb J."/>
            <person name="Runnheim R."/>
            <person name="Forrest D."/>
            <person name="Amos-Landgraf J."/>
            <person name="Schwartz D.C."/>
            <person name="Cheng Z."/>
            <person name="Lindblad-Toh K."/>
            <person name="Eichler E.E."/>
            <person name="Ponting C.P."/>
        </authorList>
    </citation>
    <scope>NUCLEOTIDE SEQUENCE [LARGE SCALE GENOMIC DNA]</scope>
    <source>
        <strain>C57BL/6J</strain>
    </source>
</reference>
<reference key="5">
    <citation type="submission" date="2005-07" db="EMBL/GenBank/DDBJ databases">
        <authorList>
            <person name="Mural R.J."/>
            <person name="Adams M.D."/>
            <person name="Myers E.W."/>
            <person name="Smith H.O."/>
            <person name="Venter J.C."/>
        </authorList>
    </citation>
    <scope>NUCLEOTIDE SEQUENCE [LARGE SCALE GENOMIC DNA]</scope>
</reference>
<reference key="6">
    <citation type="journal article" date="2004" name="Genome Res.">
        <title>The status, quality, and expansion of the NIH full-length cDNA project: the Mammalian Gene Collection (MGC).</title>
        <authorList>
            <consortium name="The MGC Project Team"/>
        </authorList>
    </citation>
    <scope>NUCLEOTIDE SEQUENCE [LARGE SCALE MRNA] (ISOFORM 1)</scope>
    <source>
        <tissue>Testis</tissue>
    </source>
</reference>
<reference key="7">
    <citation type="journal article" date="2016" name="J. Lipid Res.">
        <title>Comparative analyses of isoforms of the calcium-independent phosphatidylethanolamine N-acyltransferase PLAAT-1 in humans and mice.</title>
        <authorList>
            <person name="Hussain Z."/>
            <person name="Uyama T."/>
            <person name="Kawai K."/>
            <person name="Rahman I.A."/>
            <person name="Tsuboi K."/>
            <person name="Araki N."/>
            <person name="Ueda N."/>
        </authorList>
    </citation>
    <scope>ALTERNATIVE SPLICING (ISOFORMS 1 AND 2)</scope>
    <scope>SUBCELLULAR LOCATION (ISOFORMS 1 AND 2)</scope>
    <scope>TISSUE SPECIFICITY (ISOFORMS 1 AND 2)</scope>
    <source>
        <tissue>Heart</tissue>
    </source>
</reference>
<organism>
    <name type="scientific">Mus musculus</name>
    <name type="common">Mouse</name>
    <dbReference type="NCBI Taxonomy" id="10090"/>
    <lineage>
        <taxon>Eukaryota</taxon>
        <taxon>Metazoa</taxon>
        <taxon>Chordata</taxon>
        <taxon>Craniata</taxon>
        <taxon>Vertebrata</taxon>
        <taxon>Euteleostomi</taxon>
        <taxon>Mammalia</taxon>
        <taxon>Eutheria</taxon>
        <taxon>Euarchontoglires</taxon>
        <taxon>Glires</taxon>
        <taxon>Rodentia</taxon>
        <taxon>Myomorpha</taxon>
        <taxon>Muroidea</taxon>
        <taxon>Muridae</taxon>
        <taxon>Murinae</taxon>
        <taxon>Mus</taxon>
        <taxon>Mus</taxon>
    </lineage>
</organism>
<evidence type="ECO:0000250" key="1">
    <source>
        <dbReference type="UniProtKB" id="P53816"/>
    </source>
</evidence>
<evidence type="ECO:0000250" key="2">
    <source>
        <dbReference type="UniProtKB" id="Q9HDD0"/>
    </source>
</evidence>
<evidence type="ECO:0000255" key="3"/>
<evidence type="ECO:0000255" key="4">
    <source>
        <dbReference type="PROSITE-ProRule" id="PRU01283"/>
    </source>
</evidence>
<evidence type="ECO:0000269" key="5">
    <source>
    </source>
</evidence>
<evidence type="ECO:0000269" key="6">
    <source>
    </source>
</evidence>
<evidence type="ECO:0000269" key="7">
    <source>
    </source>
</evidence>
<evidence type="ECO:0000303" key="8">
    <source>
    </source>
</evidence>
<evidence type="ECO:0000305" key="9"/>
<evidence type="ECO:0000312" key="10">
    <source>
        <dbReference type="MGI" id="MGI:1351473"/>
    </source>
</evidence>
<protein>
    <recommendedName>
        <fullName evidence="2">Phospholipase A and acyltransferase 1</fullName>
        <ecNumber evidence="2">2.3.1.-</ecNumber>
        <ecNumber evidence="6">3.1.1.32</ecNumber>
        <ecNumber evidence="6">3.1.1.4</ecNumber>
    </recommendedName>
    <alternativeName>
        <fullName evidence="10">HRAS-like suppressor 1</fullName>
        <shortName>HRSL1</shortName>
    </alternativeName>
    <alternativeName>
        <fullName>Phospholipid-metabolizing enzyme A-C1</fullName>
    </alternativeName>
</protein>
<dbReference type="EC" id="2.3.1.-" evidence="2"/>
<dbReference type="EC" id="3.1.1.32" evidence="6"/>
<dbReference type="EC" id="3.1.1.4" evidence="6"/>
<dbReference type="EMBL" id="AF163095">
    <property type="protein sequence ID" value="AAF13304.1"/>
    <property type="molecule type" value="mRNA"/>
</dbReference>
<dbReference type="EMBL" id="AB510982">
    <property type="protein sequence ID" value="BAI63211.1"/>
    <property type="molecule type" value="mRNA"/>
</dbReference>
<dbReference type="EMBL" id="AK004528">
    <property type="protein sequence ID" value="BAB23348.1"/>
    <property type="molecule type" value="mRNA"/>
</dbReference>
<dbReference type="EMBL" id="AK039471">
    <property type="protein sequence ID" value="BAC30361.1"/>
    <property type="molecule type" value="mRNA"/>
</dbReference>
<dbReference type="EMBL" id="AC154448">
    <property type="status" value="NOT_ANNOTATED_CDS"/>
    <property type="molecule type" value="Genomic_DNA"/>
</dbReference>
<dbReference type="EMBL" id="CH466521">
    <property type="protein sequence ID" value="EDK97707.1"/>
    <property type="molecule type" value="Genomic_DNA"/>
</dbReference>
<dbReference type="EMBL" id="CH466521">
    <property type="protein sequence ID" value="EDK97708.1"/>
    <property type="molecule type" value="Genomic_DNA"/>
</dbReference>
<dbReference type="EMBL" id="BC048482">
    <property type="protein sequence ID" value="AAH48482.1"/>
    <property type="molecule type" value="mRNA"/>
</dbReference>
<dbReference type="CCDS" id="CCDS28094.1">
    <molecule id="Q9QZU4-1"/>
</dbReference>
<dbReference type="RefSeq" id="NP_038779.2">
    <property type="nucleotide sequence ID" value="NM_013751.5"/>
</dbReference>
<dbReference type="RefSeq" id="XP_006522267.1">
    <property type="nucleotide sequence ID" value="XM_006522204.1"/>
</dbReference>
<dbReference type="RefSeq" id="XP_017172511.1">
    <property type="nucleotide sequence ID" value="XM_017317022.1"/>
</dbReference>
<dbReference type="SMR" id="Q9QZU4"/>
<dbReference type="FunCoup" id="Q9QZU4">
    <property type="interactions" value="826"/>
</dbReference>
<dbReference type="STRING" id="10090.ENSMUSP00000087257"/>
<dbReference type="iPTMnet" id="Q9QZU4"/>
<dbReference type="PhosphoSitePlus" id="Q9QZU4"/>
<dbReference type="PaxDb" id="10090-ENSMUSP00000087257"/>
<dbReference type="DNASU" id="27281"/>
<dbReference type="GeneID" id="27281"/>
<dbReference type="KEGG" id="mmu:27281"/>
<dbReference type="UCSC" id="uc007yvw.1">
    <molecule id="Q9QZU4-1"/>
    <property type="organism name" value="mouse"/>
</dbReference>
<dbReference type="AGR" id="MGI:1351473"/>
<dbReference type="CTD" id="57110"/>
<dbReference type="MGI" id="MGI:1351473">
    <property type="gene designation" value="Plaat1"/>
</dbReference>
<dbReference type="eggNOG" id="ENOG502QU0S">
    <property type="taxonomic scope" value="Eukaryota"/>
</dbReference>
<dbReference type="InParanoid" id="Q9QZU4"/>
<dbReference type="OrthoDB" id="421951at2759"/>
<dbReference type="PhylomeDB" id="Q9QZU4"/>
<dbReference type="TreeFam" id="TF330836"/>
<dbReference type="Reactome" id="R-MMU-1482839">
    <property type="pathway name" value="Acyl chain remodelling of PE"/>
</dbReference>
<dbReference type="BioGRID-ORCS" id="27281">
    <property type="hits" value="1 hit in 76 CRISPR screens"/>
</dbReference>
<dbReference type="ChiTaRS" id="Hrasls">
    <property type="organism name" value="mouse"/>
</dbReference>
<dbReference type="PRO" id="PR:Q9QZU4"/>
<dbReference type="Proteomes" id="UP000000589">
    <property type="component" value="Unplaced"/>
</dbReference>
<dbReference type="RNAct" id="Q9QZU4">
    <property type="molecule type" value="protein"/>
</dbReference>
<dbReference type="GO" id="GO:0005737">
    <property type="term" value="C:cytoplasm"/>
    <property type="evidence" value="ECO:0000314"/>
    <property type="project" value="UniProtKB"/>
</dbReference>
<dbReference type="GO" id="GO:0005829">
    <property type="term" value="C:cytosol"/>
    <property type="evidence" value="ECO:0000250"/>
    <property type="project" value="UniProtKB"/>
</dbReference>
<dbReference type="GO" id="GO:0005783">
    <property type="term" value="C:endoplasmic reticulum"/>
    <property type="evidence" value="ECO:0000250"/>
    <property type="project" value="UniProtKB"/>
</dbReference>
<dbReference type="GO" id="GO:0005764">
    <property type="term" value="C:lysosome"/>
    <property type="evidence" value="ECO:0000250"/>
    <property type="project" value="UniProtKB"/>
</dbReference>
<dbReference type="GO" id="GO:0016020">
    <property type="term" value="C:membrane"/>
    <property type="evidence" value="ECO:0007669"/>
    <property type="project" value="UniProtKB-SubCell"/>
</dbReference>
<dbReference type="GO" id="GO:0005739">
    <property type="term" value="C:mitochondrion"/>
    <property type="evidence" value="ECO:0000250"/>
    <property type="project" value="UniProtKB"/>
</dbReference>
<dbReference type="GO" id="GO:0005641">
    <property type="term" value="C:nuclear envelope lumen"/>
    <property type="evidence" value="ECO:0000314"/>
    <property type="project" value="MGI"/>
</dbReference>
<dbReference type="GO" id="GO:0005634">
    <property type="term" value="C:nucleus"/>
    <property type="evidence" value="ECO:0000314"/>
    <property type="project" value="UniProtKB"/>
</dbReference>
<dbReference type="GO" id="GO:0005777">
    <property type="term" value="C:peroxisome"/>
    <property type="evidence" value="ECO:0000314"/>
    <property type="project" value="MGI"/>
</dbReference>
<dbReference type="GO" id="GO:0016410">
    <property type="term" value="F:N-acyltransferase activity"/>
    <property type="evidence" value="ECO:0000250"/>
    <property type="project" value="UniProtKB"/>
</dbReference>
<dbReference type="GO" id="GO:0008374">
    <property type="term" value="F:O-acyltransferase activity"/>
    <property type="evidence" value="ECO:0000250"/>
    <property type="project" value="UniProtKB"/>
</dbReference>
<dbReference type="GO" id="GO:0008970">
    <property type="term" value="F:phospholipase A1 activity"/>
    <property type="evidence" value="ECO:0000250"/>
    <property type="project" value="UniProtKB"/>
</dbReference>
<dbReference type="GO" id="GO:0004623">
    <property type="term" value="F:phospholipase A2 activity"/>
    <property type="evidence" value="ECO:0000250"/>
    <property type="project" value="UniProtKB"/>
</dbReference>
<dbReference type="GO" id="GO:0004620">
    <property type="term" value="F:phospholipase activity"/>
    <property type="evidence" value="ECO:0000314"/>
    <property type="project" value="UniProtKB"/>
</dbReference>
<dbReference type="GO" id="GO:0046485">
    <property type="term" value="P:ether lipid metabolic process"/>
    <property type="evidence" value="ECO:0000314"/>
    <property type="project" value="MGI"/>
</dbReference>
<dbReference type="GO" id="GO:0070306">
    <property type="term" value="P:lens fiber cell differentiation"/>
    <property type="evidence" value="ECO:0000250"/>
    <property type="project" value="UniProtKB"/>
</dbReference>
<dbReference type="GO" id="GO:0016042">
    <property type="term" value="P:lipid catabolic process"/>
    <property type="evidence" value="ECO:0007669"/>
    <property type="project" value="UniProtKB-KW"/>
</dbReference>
<dbReference type="GO" id="GO:1903008">
    <property type="term" value="P:organelle disassembly"/>
    <property type="evidence" value="ECO:0000250"/>
    <property type="project" value="UniProtKB"/>
</dbReference>
<dbReference type="GO" id="GO:0007031">
    <property type="term" value="P:peroxisome organization"/>
    <property type="evidence" value="ECO:0000314"/>
    <property type="project" value="MGI"/>
</dbReference>
<dbReference type="GO" id="GO:0046470">
    <property type="term" value="P:phosphatidylcholine metabolic process"/>
    <property type="evidence" value="ECO:0000250"/>
    <property type="project" value="UniProtKB"/>
</dbReference>
<dbReference type="GO" id="GO:0007265">
    <property type="term" value="P:Ras protein signal transduction"/>
    <property type="evidence" value="ECO:0000304"/>
    <property type="project" value="MGI"/>
</dbReference>
<dbReference type="GO" id="GO:0001558">
    <property type="term" value="P:regulation of cell growth"/>
    <property type="evidence" value="ECO:0000304"/>
    <property type="project" value="MGI"/>
</dbReference>
<dbReference type="Gene3D" id="3.90.1720.10">
    <property type="entry name" value="endopeptidase domain like (from Nostoc punctiforme)"/>
    <property type="match status" value="1"/>
</dbReference>
<dbReference type="InterPro" id="IPR051496">
    <property type="entry name" value="H-rev107_PLA/AT"/>
</dbReference>
<dbReference type="InterPro" id="IPR007053">
    <property type="entry name" value="LRAT_dom"/>
</dbReference>
<dbReference type="PANTHER" id="PTHR13943">
    <property type="entry name" value="HRAS-LIKE SUPPRESSOR - RELATED"/>
    <property type="match status" value="1"/>
</dbReference>
<dbReference type="PANTHER" id="PTHR13943:SF37">
    <property type="entry name" value="PHOSPHOLIPASE A AND ACYLTRANSFERASE 1"/>
    <property type="match status" value="1"/>
</dbReference>
<dbReference type="Pfam" id="PF04970">
    <property type="entry name" value="LRAT"/>
    <property type="match status" value="1"/>
</dbReference>
<dbReference type="PROSITE" id="PS51934">
    <property type="entry name" value="LRAT"/>
    <property type="match status" value="1"/>
</dbReference>
<name>PLAT1_MOUSE</name>
<keyword id="KW-0025">Alternative splicing</keyword>
<keyword id="KW-0963">Cytoplasm</keyword>
<keyword id="KW-0378">Hydrolase</keyword>
<keyword id="KW-0442">Lipid degradation</keyword>
<keyword id="KW-0443">Lipid metabolism</keyword>
<keyword id="KW-0472">Membrane</keyword>
<keyword id="KW-0539">Nucleus</keyword>
<keyword id="KW-1185">Reference proteome</keyword>
<keyword id="KW-0808">Transferase</keyword>
<keyword id="KW-0812">Transmembrane</keyword>
<keyword id="KW-1133">Transmembrane helix</keyword>